<sequence>MTAAPLMPDSTHPCRRRKSYTFFWCSLGVYAEALLFLLSHLSDACELPRPFEAMELKGTPKLFYAVGEKIEYKCKKGYLYLSPYLMIATCEPNHTWVPISDAGCIKVQCTMLQDPSFGKVYYIDGSFSWGARAKFTCMEGYYVVGMSVLHCVLKGDDEAYWNGYPPHCEKIYCLPPPKIKNGTHTLTDINVFKYHEAVSYSCDPTPGPDKFSLVGTSMIFCAGHNTWSNSPPECKVVKCPNPVLQNGRLISGAGEIFSYQSTVMFECLQGFYMEGSSMVICSANNSWEPSIPKCLKGPRPTHPTKPPVYNYTGYPSPREGIFSQELDAWIIALIVITSIVGVFILCLIVLRCFEHRKKTNVSAAR</sequence>
<feature type="signal peptide" evidence="3">
    <location>
        <begin position="1"/>
        <end position="44"/>
    </location>
</feature>
<feature type="chain" id="PRO_0000238971" description="Membrane cofactor protein">
    <location>
        <begin position="45"/>
        <end position="365"/>
    </location>
</feature>
<feature type="topological domain" description="Extracellular" evidence="3">
    <location>
        <begin position="45"/>
        <end position="329"/>
    </location>
</feature>
<feature type="transmembrane region" description="Helical" evidence="3">
    <location>
        <begin position="330"/>
        <end position="350"/>
    </location>
</feature>
<feature type="topological domain" description="Cytoplasmic" evidence="3">
    <location>
        <begin position="351"/>
        <end position="365"/>
    </location>
</feature>
<feature type="domain" description="Sushi 1" evidence="4">
    <location>
        <begin position="45"/>
        <end position="106"/>
    </location>
</feature>
<feature type="domain" description="Sushi 2" evidence="4">
    <location>
        <begin position="107"/>
        <end position="170"/>
    </location>
</feature>
<feature type="domain" description="Sushi 3" evidence="4">
    <location>
        <begin position="171"/>
        <end position="236"/>
    </location>
</feature>
<feature type="domain" description="Sushi 4" evidence="4">
    <location>
        <begin position="237"/>
        <end position="296"/>
    </location>
</feature>
<feature type="glycosylation site" description="N-linked (GlcNAc...) asparagine" evidence="3">
    <location>
        <position position="181"/>
    </location>
</feature>
<feature type="glycosylation site" description="O-linked (GalNAc...) threonine" evidence="3">
    <location>
        <position position="205"/>
    </location>
</feature>
<feature type="glycosylation site" description="O-linked (GalNAc...) threonine" evidence="3">
    <location>
        <position position="301"/>
    </location>
</feature>
<feature type="glycosylation site" description="O-linked (GalNAc...) threonine" evidence="3">
    <location>
        <position position="304"/>
    </location>
</feature>
<feature type="glycosylation site" description="N-linked (GlcNAc...) asparagine" evidence="3">
    <location>
        <position position="310"/>
    </location>
</feature>
<feature type="glycosylation site" description="O-linked (GalNAc...) threonine" evidence="3">
    <location>
        <position position="312"/>
    </location>
</feature>
<feature type="disulfide bond" evidence="4">
    <location>
        <begin position="109"/>
        <end position="151"/>
    </location>
</feature>
<feature type="disulfide bond" evidence="4">
    <location>
        <begin position="137"/>
        <end position="168"/>
    </location>
</feature>
<feature type="disulfide bond" evidence="4">
    <location>
        <begin position="173"/>
        <end position="221"/>
    </location>
</feature>
<feature type="disulfide bond" evidence="4">
    <location>
        <begin position="202"/>
        <end position="234"/>
    </location>
</feature>
<feature type="disulfide bond" evidence="4">
    <location>
        <begin position="239"/>
        <end position="281"/>
    </location>
</feature>
<feature type="disulfide bond" evidence="4">
    <location>
        <begin position="267"/>
        <end position="294"/>
    </location>
</feature>
<feature type="splice variant" id="VSP_019038" description="In isoform 2." evidence="8">
    <original>GPRPTHPTKPPVYN</original>
    <variation>VTF</variation>
    <location>
        <begin position="297"/>
        <end position="310"/>
    </location>
</feature>
<feature type="splice variant" id="VSP_019039" description="In isoform 2." evidence="8">
    <location>
        <begin position="311"/>
        <end position="365"/>
    </location>
</feature>
<evidence type="ECO:0000250" key="1"/>
<evidence type="ECO:0000250" key="2">
    <source>
        <dbReference type="UniProtKB" id="P15529"/>
    </source>
</evidence>
<evidence type="ECO:0000255" key="3"/>
<evidence type="ECO:0000255" key="4">
    <source>
        <dbReference type="PROSITE-ProRule" id="PRU00302"/>
    </source>
</evidence>
<evidence type="ECO:0000269" key="5">
    <source>
    </source>
</evidence>
<evidence type="ECO:0000269" key="6">
    <source>
    </source>
</evidence>
<evidence type="ECO:0000269" key="7">
    <source>
    </source>
</evidence>
<evidence type="ECO:0000303" key="8">
    <source>
    </source>
</evidence>
<evidence type="ECO:0000305" key="9"/>
<accession>O88174</accession>
<accession>Q9R0R9</accession>
<organism>
    <name type="scientific">Mus musculus</name>
    <name type="common">Mouse</name>
    <dbReference type="NCBI Taxonomy" id="10090"/>
    <lineage>
        <taxon>Eukaryota</taxon>
        <taxon>Metazoa</taxon>
        <taxon>Chordata</taxon>
        <taxon>Craniata</taxon>
        <taxon>Vertebrata</taxon>
        <taxon>Euteleostomi</taxon>
        <taxon>Mammalia</taxon>
        <taxon>Eutheria</taxon>
        <taxon>Euarchontoglires</taxon>
        <taxon>Glires</taxon>
        <taxon>Rodentia</taxon>
        <taxon>Myomorpha</taxon>
        <taxon>Muroidea</taxon>
        <taxon>Muridae</taxon>
        <taxon>Murinae</taxon>
        <taxon>Mus</taxon>
        <taxon>Mus</taxon>
    </lineage>
</organism>
<keyword id="KW-0025">Alternative splicing</keyword>
<keyword id="KW-0968">Cytoplasmic vesicle</keyword>
<keyword id="KW-1015">Disulfide bond</keyword>
<keyword id="KW-0278">Fertilization</keyword>
<keyword id="KW-0325">Glycoprotein</keyword>
<keyword id="KW-0472">Membrane</keyword>
<keyword id="KW-1185">Reference proteome</keyword>
<keyword id="KW-0677">Repeat</keyword>
<keyword id="KW-0964">Secreted</keyword>
<keyword id="KW-0732">Signal</keyword>
<keyword id="KW-0768">Sushi</keyword>
<keyword id="KW-0812">Transmembrane</keyword>
<keyword id="KW-1133">Transmembrane helix</keyword>
<protein>
    <recommendedName>
        <fullName>Membrane cofactor protein</fullName>
    </recommendedName>
    <cdAntigenName>CD46</cdAntigenName>
</protein>
<dbReference type="EMBL" id="AB001566">
    <property type="protein sequence ID" value="BAA31859.1"/>
    <property type="molecule type" value="mRNA"/>
</dbReference>
<dbReference type="EMBL" id="AB010919">
    <property type="protein sequence ID" value="BAA34810.1"/>
    <property type="molecule type" value="mRNA"/>
</dbReference>
<dbReference type="EMBL" id="AB022600">
    <property type="protein sequence ID" value="BAA86056.1"/>
    <property type="molecule type" value="mRNA"/>
</dbReference>
<dbReference type="EMBL" id="AK006632">
    <property type="protein sequence ID" value="BAB24682.1"/>
    <property type="molecule type" value="mRNA"/>
</dbReference>
<dbReference type="CCDS" id="CCDS35828.1">
    <molecule id="O88174-1"/>
</dbReference>
<dbReference type="RefSeq" id="NP_034908.1">
    <molecule id="O88174-1"/>
    <property type="nucleotide sequence ID" value="NM_010778.4"/>
</dbReference>
<dbReference type="SMR" id="O88174"/>
<dbReference type="FunCoup" id="O88174">
    <property type="interactions" value="307"/>
</dbReference>
<dbReference type="STRING" id="10090.ENSMUSP00000123931"/>
<dbReference type="GlyCosmos" id="O88174">
    <property type="glycosylation" value="6 sites, No reported glycans"/>
</dbReference>
<dbReference type="GlyGen" id="O88174">
    <property type="glycosylation" value="6 sites"/>
</dbReference>
<dbReference type="PhosphoSitePlus" id="O88174"/>
<dbReference type="SwissPalm" id="O88174"/>
<dbReference type="PaxDb" id="10090-ENSMUSP00000123931"/>
<dbReference type="ProteomicsDB" id="295714">
    <molecule id="O88174-1"/>
</dbReference>
<dbReference type="ProteomicsDB" id="295715">
    <molecule id="O88174-2"/>
</dbReference>
<dbReference type="Antibodypedia" id="2378">
    <property type="antibodies" value="1311 antibodies from 46 providers"/>
</dbReference>
<dbReference type="DNASU" id="17221"/>
<dbReference type="Ensembl" id="ENSMUST00000162650.8">
    <molecule id="O88174-1"/>
    <property type="protein sequence ID" value="ENSMUSP00000123931.2"/>
    <property type="gene ID" value="ENSMUSG00000016493.14"/>
</dbReference>
<dbReference type="GeneID" id="17221"/>
<dbReference type="KEGG" id="mmu:17221"/>
<dbReference type="UCSC" id="uc007eet.1">
    <molecule id="O88174-1"/>
    <property type="organism name" value="mouse"/>
</dbReference>
<dbReference type="AGR" id="MGI:1203290"/>
<dbReference type="CTD" id="4179"/>
<dbReference type="MGI" id="MGI:1203290">
    <property type="gene designation" value="Cd46"/>
</dbReference>
<dbReference type="VEuPathDB" id="HostDB:ENSMUSG00000016493"/>
<dbReference type="eggNOG" id="ENOG502QPUC">
    <property type="taxonomic scope" value="Eukaryota"/>
</dbReference>
<dbReference type="GeneTree" id="ENSGT00940000161381"/>
<dbReference type="HOGENOM" id="CLU_020107_1_2_1"/>
<dbReference type="InParanoid" id="O88174"/>
<dbReference type="OMA" id="EVQFECN"/>
<dbReference type="OrthoDB" id="6480633at2759"/>
<dbReference type="PhylomeDB" id="O88174"/>
<dbReference type="TreeFam" id="TF334137"/>
<dbReference type="Reactome" id="R-MMU-977606">
    <property type="pathway name" value="Regulation of Complement cascade"/>
</dbReference>
<dbReference type="BioGRID-ORCS" id="17221">
    <property type="hits" value="2 hits in 77 CRISPR screens"/>
</dbReference>
<dbReference type="ChiTaRS" id="Cd46">
    <property type="organism name" value="mouse"/>
</dbReference>
<dbReference type="PRO" id="PR:O88174"/>
<dbReference type="Proteomes" id="UP000000589">
    <property type="component" value="Chromosome 1"/>
</dbReference>
<dbReference type="RNAct" id="O88174">
    <property type="molecule type" value="protein"/>
</dbReference>
<dbReference type="Bgee" id="ENSMUSG00000016493">
    <property type="expression patterns" value="Expressed in seminiferous tubule of testis and 142 other cell types or tissues"/>
</dbReference>
<dbReference type="ExpressionAtlas" id="O88174">
    <property type="expression patterns" value="baseline and differential"/>
</dbReference>
<dbReference type="GO" id="GO:0009986">
    <property type="term" value="C:cell surface"/>
    <property type="evidence" value="ECO:0007669"/>
    <property type="project" value="InterPro"/>
</dbReference>
<dbReference type="GO" id="GO:0005576">
    <property type="term" value="C:extracellular region"/>
    <property type="evidence" value="ECO:0007669"/>
    <property type="project" value="UniProtKB-SubCell"/>
</dbReference>
<dbReference type="GO" id="GO:0002079">
    <property type="term" value="C:inner acrosomal membrane"/>
    <property type="evidence" value="ECO:0007669"/>
    <property type="project" value="UniProtKB-SubCell"/>
</dbReference>
<dbReference type="GO" id="GO:0007338">
    <property type="term" value="P:single fertilization"/>
    <property type="evidence" value="ECO:0007669"/>
    <property type="project" value="UniProtKB-KW"/>
</dbReference>
<dbReference type="CDD" id="cd00033">
    <property type="entry name" value="CCP"/>
    <property type="match status" value="4"/>
</dbReference>
<dbReference type="FunFam" id="2.10.70.10:FF:000055">
    <property type="entry name" value="Complement decay-accelerating factor, GPI-anchored"/>
    <property type="match status" value="1"/>
</dbReference>
<dbReference type="FunFam" id="2.10.70.10:FF:000014">
    <property type="entry name" value="Membrane cofactor protein"/>
    <property type="match status" value="1"/>
</dbReference>
<dbReference type="FunFam" id="2.10.70.10:FF:000042">
    <property type="entry name" value="Membrane cofactor protein"/>
    <property type="match status" value="1"/>
</dbReference>
<dbReference type="Gene3D" id="2.10.70.10">
    <property type="entry name" value="Complement Module, domain 1"/>
    <property type="match status" value="4"/>
</dbReference>
<dbReference type="InterPro" id="IPR017341">
    <property type="entry name" value="CD46"/>
</dbReference>
<dbReference type="InterPro" id="IPR050350">
    <property type="entry name" value="Compl-Cell_Adhes-Reg"/>
</dbReference>
<dbReference type="InterPro" id="IPR035976">
    <property type="entry name" value="Sushi/SCR/CCP_sf"/>
</dbReference>
<dbReference type="InterPro" id="IPR000436">
    <property type="entry name" value="Sushi_SCR_CCP_dom"/>
</dbReference>
<dbReference type="PANTHER" id="PTHR19325">
    <property type="entry name" value="COMPLEMENT COMPONENT-RELATED SUSHI DOMAIN-CONTAINING"/>
    <property type="match status" value="1"/>
</dbReference>
<dbReference type="PANTHER" id="PTHR19325:SF521">
    <property type="entry name" value="MEMBRANE COFACTOR PROTEIN"/>
    <property type="match status" value="1"/>
</dbReference>
<dbReference type="Pfam" id="PF00084">
    <property type="entry name" value="Sushi"/>
    <property type="match status" value="4"/>
</dbReference>
<dbReference type="PIRSF" id="PIRSF037971">
    <property type="entry name" value="TLX_CD46"/>
    <property type="match status" value="1"/>
</dbReference>
<dbReference type="SMART" id="SM00032">
    <property type="entry name" value="CCP"/>
    <property type="match status" value="4"/>
</dbReference>
<dbReference type="SUPFAM" id="SSF57535">
    <property type="entry name" value="Complement control module/SCR domain"/>
    <property type="match status" value="4"/>
</dbReference>
<dbReference type="PROSITE" id="PS50923">
    <property type="entry name" value="SUSHI"/>
    <property type="match status" value="4"/>
</dbReference>
<proteinExistence type="evidence at protein level"/>
<gene>
    <name type="primary">Cd46</name>
    <name type="synonym">Mcp</name>
</gene>
<name>MCP_MOUSE</name>
<comment type="function">
    <text evidence="5">May be involved in the fusion of the spermatozoa with the oocyte during fertilization.</text>
</comment>
<comment type="subunit">
    <text evidence="2">Interacts with C3b. Interacts with C4b. Interacts with moesin/MSN.</text>
</comment>
<comment type="subcellular location">
    <molecule>Isoform 1</molecule>
    <subcellularLocation>
        <location>Cytoplasmic vesicle</location>
        <location>Secretory vesicle</location>
        <location>Acrosome inner membrane</location>
        <topology>Single-pass type I membrane protein</topology>
    </subcellularLocation>
    <text>Inner acrosomal membrane of spermatozoa.</text>
</comment>
<comment type="subcellular location">
    <molecule>Isoform 2</molecule>
    <subcellularLocation>
        <location evidence="9">Secreted</location>
    </subcellularLocation>
</comment>
<comment type="alternative products">
    <event type="alternative splicing"/>
    <isoform>
        <id>O88174-1</id>
        <name>1</name>
        <sequence type="displayed"/>
    </isoform>
    <isoform>
        <id>O88174-2</id>
        <name>2</name>
        <sequence type="described" ref="VSP_019038 VSP_019039"/>
    </isoform>
    <text>Additional isoforms seem to exist.</text>
</comment>
<comment type="tissue specificity">
    <text evidence="5 6 7">Present only in testis (at protein level).</text>
</comment>
<comment type="developmental stage">
    <text evidence="6">Not expressed until 29 dpc. Expressed in parallel with synthesis of spermatids.</text>
</comment>
<comment type="PTM">
    <text evidence="1">May be O-glycosylated.</text>
</comment>
<comment type="PTM">
    <text evidence="5">N-glycosylated.</text>
</comment>
<comment type="disruption phenotype">
    <text evidence="5">Mice have normal testis and fertile sperm.</text>
</comment>
<comment type="miscellaneous">
    <molecule>Isoform 2</molecule>
    <text evidence="9">Lacks transmembrane domain, probably secreted.</text>
</comment>
<reference key="1">
    <citation type="journal article" date="1998" name="Biochem. J.">
        <title>Molecular cloning of a murine homologue of membrane cofactor protein (CD46): preferential expression in testicular germ cells.</title>
        <authorList>
            <person name="Tsujimura A."/>
            <person name="Shida K."/>
            <person name="Kitamura M."/>
            <person name="Nomura M."/>
            <person name="Takeda J."/>
            <person name="Tanaka H."/>
            <person name="Matsumoto M."/>
            <person name="Matsumiya K."/>
            <person name="Okuyama A."/>
            <person name="Nishimune Y."/>
            <person name="Okabe M."/>
            <person name="Seya T."/>
        </authorList>
    </citation>
    <scope>NUCLEOTIDE SEQUENCE [MRNA] (ISOFORM 1)</scope>
    <scope>TISSUE SPECIFICITY</scope>
    <scope>DEVELOPMENTAL STAGE</scope>
    <source>
        <strain>C57BL/6J</strain>
        <tissue>Testis</tissue>
    </source>
</reference>
<reference key="2">
    <citation type="journal article" date="1998" name="Immunogenetics">
        <title>Molecular cloning of rat and mouse membrane cofactor protein (MCP, CD46): preferential expression in testis and close linkage between the mouse Mcp and Cr2 genes on distal chromosome 1.</title>
        <authorList>
            <person name="Miwa T."/>
            <person name="Nonaka M."/>
            <person name="Okada N."/>
            <person name="Wakana S."/>
            <person name="Shiroishi T."/>
            <person name="Okada H."/>
        </authorList>
    </citation>
    <scope>NUCLEOTIDE SEQUENCE [MRNA] (ISOFORM 1)</scope>
    <scope>TISSUE SPECIFICITY</scope>
    <source>
        <strain>C57BL/6J</strain>
        <tissue>Testis</tissue>
    </source>
</reference>
<reference key="3">
    <citation type="journal article" date="1999" name="Immunogenetics">
        <title>Membrane and secretory forms of mouse membrane cofactor protein (CD46) generated from a single gene through alternative splicing.</title>
        <authorList>
            <person name="Nomura M."/>
            <person name="Tsujimura A."/>
            <person name="Shida K."/>
            <person name="Matsumoto M."/>
            <person name="Matsuda Y."/>
            <person name="Toyoshima K."/>
            <person name="Seya T."/>
        </authorList>
    </citation>
    <scope>NUCLEOTIDE SEQUENCE [MRNA] (ISOFORM 2)</scope>
</reference>
<reference key="4">
    <citation type="journal article" date="2005" name="Science">
        <title>The transcriptional landscape of the mammalian genome.</title>
        <authorList>
            <person name="Carninci P."/>
            <person name="Kasukawa T."/>
            <person name="Katayama S."/>
            <person name="Gough J."/>
            <person name="Frith M.C."/>
            <person name="Maeda N."/>
            <person name="Oyama R."/>
            <person name="Ravasi T."/>
            <person name="Lenhard B."/>
            <person name="Wells C."/>
            <person name="Kodzius R."/>
            <person name="Shimokawa K."/>
            <person name="Bajic V.B."/>
            <person name="Brenner S.E."/>
            <person name="Batalov S."/>
            <person name="Forrest A.R."/>
            <person name="Zavolan M."/>
            <person name="Davis M.J."/>
            <person name="Wilming L.G."/>
            <person name="Aidinis V."/>
            <person name="Allen J.E."/>
            <person name="Ambesi-Impiombato A."/>
            <person name="Apweiler R."/>
            <person name="Aturaliya R.N."/>
            <person name="Bailey T.L."/>
            <person name="Bansal M."/>
            <person name="Baxter L."/>
            <person name="Beisel K.W."/>
            <person name="Bersano T."/>
            <person name="Bono H."/>
            <person name="Chalk A.M."/>
            <person name="Chiu K.P."/>
            <person name="Choudhary V."/>
            <person name="Christoffels A."/>
            <person name="Clutterbuck D.R."/>
            <person name="Crowe M.L."/>
            <person name="Dalla E."/>
            <person name="Dalrymple B.P."/>
            <person name="de Bono B."/>
            <person name="Della Gatta G."/>
            <person name="di Bernardo D."/>
            <person name="Down T."/>
            <person name="Engstrom P."/>
            <person name="Fagiolini M."/>
            <person name="Faulkner G."/>
            <person name="Fletcher C.F."/>
            <person name="Fukushima T."/>
            <person name="Furuno M."/>
            <person name="Futaki S."/>
            <person name="Gariboldi M."/>
            <person name="Georgii-Hemming P."/>
            <person name="Gingeras T.R."/>
            <person name="Gojobori T."/>
            <person name="Green R.E."/>
            <person name="Gustincich S."/>
            <person name="Harbers M."/>
            <person name="Hayashi Y."/>
            <person name="Hensch T.K."/>
            <person name="Hirokawa N."/>
            <person name="Hill D."/>
            <person name="Huminiecki L."/>
            <person name="Iacono M."/>
            <person name="Ikeo K."/>
            <person name="Iwama A."/>
            <person name="Ishikawa T."/>
            <person name="Jakt M."/>
            <person name="Kanapin A."/>
            <person name="Katoh M."/>
            <person name="Kawasawa Y."/>
            <person name="Kelso J."/>
            <person name="Kitamura H."/>
            <person name="Kitano H."/>
            <person name="Kollias G."/>
            <person name="Krishnan S.P."/>
            <person name="Kruger A."/>
            <person name="Kummerfeld S.K."/>
            <person name="Kurochkin I.V."/>
            <person name="Lareau L.F."/>
            <person name="Lazarevic D."/>
            <person name="Lipovich L."/>
            <person name="Liu J."/>
            <person name="Liuni S."/>
            <person name="McWilliam S."/>
            <person name="Madan Babu M."/>
            <person name="Madera M."/>
            <person name="Marchionni L."/>
            <person name="Matsuda H."/>
            <person name="Matsuzawa S."/>
            <person name="Miki H."/>
            <person name="Mignone F."/>
            <person name="Miyake S."/>
            <person name="Morris K."/>
            <person name="Mottagui-Tabar S."/>
            <person name="Mulder N."/>
            <person name="Nakano N."/>
            <person name="Nakauchi H."/>
            <person name="Ng P."/>
            <person name="Nilsson R."/>
            <person name="Nishiguchi S."/>
            <person name="Nishikawa S."/>
            <person name="Nori F."/>
            <person name="Ohara O."/>
            <person name="Okazaki Y."/>
            <person name="Orlando V."/>
            <person name="Pang K.C."/>
            <person name="Pavan W.J."/>
            <person name="Pavesi G."/>
            <person name="Pesole G."/>
            <person name="Petrovsky N."/>
            <person name="Piazza S."/>
            <person name="Reed J."/>
            <person name="Reid J.F."/>
            <person name="Ring B.Z."/>
            <person name="Ringwald M."/>
            <person name="Rost B."/>
            <person name="Ruan Y."/>
            <person name="Salzberg S.L."/>
            <person name="Sandelin A."/>
            <person name="Schneider C."/>
            <person name="Schoenbach C."/>
            <person name="Sekiguchi K."/>
            <person name="Semple C.A."/>
            <person name="Seno S."/>
            <person name="Sessa L."/>
            <person name="Sheng Y."/>
            <person name="Shibata Y."/>
            <person name="Shimada H."/>
            <person name="Shimada K."/>
            <person name="Silva D."/>
            <person name="Sinclair B."/>
            <person name="Sperling S."/>
            <person name="Stupka E."/>
            <person name="Sugiura K."/>
            <person name="Sultana R."/>
            <person name="Takenaka Y."/>
            <person name="Taki K."/>
            <person name="Tammoja K."/>
            <person name="Tan S.L."/>
            <person name="Tang S."/>
            <person name="Taylor M.S."/>
            <person name="Tegner J."/>
            <person name="Teichmann S.A."/>
            <person name="Ueda H.R."/>
            <person name="van Nimwegen E."/>
            <person name="Verardo R."/>
            <person name="Wei C.L."/>
            <person name="Yagi K."/>
            <person name="Yamanishi H."/>
            <person name="Zabarovsky E."/>
            <person name="Zhu S."/>
            <person name="Zimmer A."/>
            <person name="Hide W."/>
            <person name="Bult C."/>
            <person name="Grimmond S.M."/>
            <person name="Teasdale R.D."/>
            <person name="Liu E.T."/>
            <person name="Brusic V."/>
            <person name="Quackenbush J."/>
            <person name="Wahlestedt C."/>
            <person name="Mattick J.S."/>
            <person name="Hume D.A."/>
            <person name="Kai C."/>
            <person name="Sasaki D."/>
            <person name="Tomaru Y."/>
            <person name="Fukuda S."/>
            <person name="Kanamori-Katayama M."/>
            <person name="Suzuki M."/>
            <person name="Aoki J."/>
            <person name="Arakawa T."/>
            <person name="Iida J."/>
            <person name="Imamura K."/>
            <person name="Itoh M."/>
            <person name="Kato T."/>
            <person name="Kawaji H."/>
            <person name="Kawagashira N."/>
            <person name="Kawashima T."/>
            <person name="Kojima M."/>
            <person name="Kondo S."/>
            <person name="Konno H."/>
            <person name="Nakano K."/>
            <person name="Ninomiya N."/>
            <person name="Nishio T."/>
            <person name="Okada M."/>
            <person name="Plessy C."/>
            <person name="Shibata K."/>
            <person name="Shiraki T."/>
            <person name="Suzuki S."/>
            <person name="Tagami M."/>
            <person name="Waki K."/>
            <person name="Watahiki A."/>
            <person name="Okamura-Oho Y."/>
            <person name="Suzuki H."/>
            <person name="Kawai J."/>
            <person name="Hayashizaki Y."/>
        </authorList>
    </citation>
    <scope>NUCLEOTIDE SEQUENCE [LARGE SCALE MRNA] (ISOFORM 1)</scope>
    <source>
        <strain>C57BL/6J</strain>
        <tissue>Testis</tissue>
    </source>
</reference>
<reference key="5">
    <citation type="journal article" date="2003" name="Mol. Cell. Biol.">
        <title>Disruption of mouse CD46 causes an accelerated spontaneous acrosome reaction in sperm.</title>
        <authorList>
            <person name="Inoue N."/>
            <person name="Ikawa M."/>
            <person name="Nakanishi T."/>
            <person name="Matsumoto M."/>
            <person name="Nomura M."/>
            <person name="Seya T."/>
            <person name="Okabe M."/>
        </authorList>
    </citation>
    <scope>GLYCOSYLATION</scope>
    <scope>FUNCTION</scope>
    <scope>SUBCELLULAR LOCATION</scope>
    <scope>TISSUE SPECIFICITY</scope>
    <scope>DISRUPTION PHENOTYPE</scope>
</reference>